<proteinExistence type="inferred from homology"/>
<accession>Q8FN57</accession>
<sequence length="426" mass="47102">MARMQESADLLKCSFCGKSQKQVKKLIAGGAVYICDECIELCNEIIEEELGQAQGQEEEHGELPKPSEISAFLDKYVVGQDQAKRILSVAVYNHYKRLRAHEQIGGRRRRDEEDTELIKSNILLLGPTGSGKTYLAQTLAKLLDVPFAIADATSLTEAGYVGEDVENILLKLLQAADFDVERAQRGIIYIDEVDKISRKSENPSITRDVSGEGVQQALLKILEGTVAAIPPQGGRKHPNQDFIQLDTTNILFIVAGAFSGLEKIIGERRGKKGLGFGVEVASKKDEEKEDIFKDVRPEDLVKFGLIPEFIGRLPVVATVANLDQESLVKVLTEPRNSLVKQYKRLFEMDDTLLTFTDDALEAIADLALERKTGARGLRAILEEILVPIMYDIPDRDDVTEVVITGEVARGEAEPELITHTAEEKTA</sequence>
<protein>
    <recommendedName>
        <fullName evidence="1">ATP-dependent Clp protease ATP-binding subunit ClpX</fullName>
    </recommendedName>
</protein>
<keyword id="KW-0067">ATP-binding</keyword>
<keyword id="KW-0143">Chaperone</keyword>
<keyword id="KW-0479">Metal-binding</keyword>
<keyword id="KW-0547">Nucleotide-binding</keyword>
<keyword id="KW-1185">Reference proteome</keyword>
<keyword id="KW-0862">Zinc</keyword>
<dbReference type="EMBL" id="BA000035">
    <property type="protein sequence ID" value="BAC19101.1"/>
    <property type="molecule type" value="Genomic_DNA"/>
</dbReference>
<dbReference type="RefSeq" id="WP_011075854.1">
    <property type="nucleotide sequence ID" value="NC_004369.1"/>
</dbReference>
<dbReference type="SMR" id="Q8FN57"/>
<dbReference type="STRING" id="196164.gene:10742722"/>
<dbReference type="KEGG" id="cef:CE2291"/>
<dbReference type="eggNOG" id="COG1219">
    <property type="taxonomic scope" value="Bacteria"/>
</dbReference>
<dbReference type="HOGENOM" id="CLU_014218_8_2_11"/>
<dbReference type="Proteomes" id="UP000001409">
    <property type="component" value="Chromosome"/>
</dbReference>
<dbReference type="GO" id="GO:0009376">
    <property type="term" value="C:HslUV protease complex"/>
    <property type="evidence" value="ECO:0007669"/>
    <property type="project" value="TreeGrafter"/>
</dbReference>
<dbReference type="GO" id="GO:0005524">
    <property type="term" value="F:ATP binding"/>
    <property type="evidence" value="ECO:0007669"/>
    <property type="project" value="UniProtKB-UniRule"/>
</dbReference>
<dbReference type="GO" id="GO:0016887">
    <property type="term" value="F:ATP hydrolysis activity"/>
    <property type="evidence" value="ECO:0007669"/>
    <property type="project" value="InterPro"/>
</dbReference>
<dbReference type="GO" id="GO:0140662">
    <property type="term" value="F:ATP-dependent protein folding chaperone"/>
    <property type="evidence" value="ECO:0007669"/>
    <property type="project" value="InterPro"/>
</dbReference>
<dbReference type="GO" id="GO:0046983">
    <property type="term" value="F:protein dimerization activity"/>
    <property type="evidence" value="ECO:0007669"/>
    <property type="project" value="InterPro"/>
</dbReference>
<dbReference type="GO" id="GO:0051082">
    <property type="term" value="F:unfolded protein binding"/>
    <property type="evidence" value="ECO:0007669"/>
    <property type="project" value="UniProtKB-UniRule"/>
</dbReference>
<dbReference type="GO" id="GO:0008270">
    <property type="term" value="F:zinc ion binding"/>
    <property type="evidence" value="ECO:0007669"/>
    <property type="project" value="InterPro"/>
</dbReference>
<dbReference type="GO" id="GO:0051301">
    <property type="term" value="P:cell division"/>
    <property type="evidence" value="ECO:0007669"/>
    <property type="project" value="TreeGrafter"/>
</dbReference>
<dbReference type="GO" id="GO:0051603">
    <property type="term" value="P:proteolysis involved in protein catabolic process"/>
    <property type="evidence" value="ECO:0007669"/>
    <property type="project" value="TreeGrafter"/>
</dbReference>
<dbReference type="CDD" id="cd19497">
    <property type="entry name" value="RecA-like_ClpX"/>
    <property type="match status" value="1"/>
</dbReference>
<dbReference type="FunFam" id="1.10.8.60:FF:000002">
    <property type="entry name" value="ATP-dependent Clp protease ATP-binding subunit ClpX"/>
    <property type="match status" value="1"/>
</dbReference>
<dbReference type="FunFam" id="3.40.50.300:FF:000005">
    <property type="entry name" value="ATP-dependent Clp protease ATP-binding subunit ClpX"/>
    <property type="match status" value="1"/>
</dbReference>
<dbReference type="Gene3D" id="1.10.8.60">
    <property type="match status" value="1"/>
</dbReference>
<dbReference type="Gene3D" id="6.20.220.10">
    <property type="entry name" value="ClpX chaperone, C4-type zinc finger domain"/>
    <property type="match status" value="1"/>
</dbReference>
<dbReference type="Gene3D" id="3.40.50.300">
    <property type="entry name" value="P-loop containing nucleotide triphosphate hydrolases"/>
    <property type="match status" value="1"/>
</dbReference>
<dbReference type="HAMAP" id="MF_00175">
    <property type="entry name" value="ClpX"/>
    <property type="match status" value="1"/>
</dbReference>
<dbReference type="InterPro" id="IPR003593">
    <property type="entry name" value="AAA+_ATPase"/>
</dbReference>
<dbReference type="InterPro" id="IPR050052">
    <property type="entry name" value="ATP-dep_Clp_protease_ClpX"/>
</dbReference>
<dbReference type="InterPro" id="IPR003959">
    <property type="entry name" value="ATPase_AAA_core"/>
</dbReference>
<dbReference type="InterPro" id="IPR019489">
    <property type="entry name" value="Clp_ATPase_C"/>
</dbReference>
<dbReference type="InterPro" id="IPR004487">
    <property type="entry name" value="Clp_protease_ATP-bd_su_ClpX"/>
</dbReference>
<dbReference type="InterPro" id="IPR046425">
    <property type="entry name" value="ClpX_bact"/>
</dbReference>
<dbReference type="InterPro" id="IPR027417">
    <property type="entry name" value="P-loop_NTPase"/>
</dbReference>
<dbReference type="InterPro" id="IPR010603">
    <property type="entry name" value="Znf_CppX_C4"/>
</dbReference>
<dbReference type="InterPro" id="IPR038366">
    <property type="entry name" value="Znf_CppX_C4_sf"/>
</dbReference>
<dbReference type="NCBIfam" id="TIGR00382">
    <property type="entry name" value="clpX"/>
    <property type="match status" value="1"/>
</dbReference>
<dbReference type="NCBIfam" id="NF003745">
    <property type="entry name" value="PRK05342.1"/>
    <property type="match status" value="1"/>
</dbReference>
<dbReference type="PANTHER" id="PTHR48102:SF7">
    <property type="entry name" value="ATP-DEPENDENT CLP PROTEASE ATP-BINDING SUBUNIT CLPX-LIKE, MITOCHONDRIAL"/>
    <property type="match status" value="1"/>
</dbReference>
<dbReference type="PANTHER" id="PTHR48102">
    <property type="entry name" value="ATP-DEPENDENT CLP PROTEASE ATP-BINDING SUBUNIT CLPX-LIKE, MITOCHONDRIAL-RELATED"/>
    <property type="match status" value="1"/>
</dbReference>
<dbReference type="Pfam" id="PF07724">
    <property type="entry name" value="AAA_2"/>
    <property type="match status" value="1"/>
</dbReference>
<dbReference type="Pfam" id="PF10431">
    <property type="entry name" value="ClpB_D2-small"/>
    <property type="match status" value="1"/>
</dbReference>
<dbReference type="Pfam" id="PF06689">
    <property type="entry name" value="zf-C4_ClpX"/>
    <property type="match status" value="1"/>
</dbReference>
<dbReference type="SMART" id="SM00382">
    <property type="entry name" value="AAA"/>
    <property type="match status" value="1"/>
</dbReference>
<dbReference type="SMART" id="SM01086">
    <property type="entry name" value="ClpB_D2-small"/>
    <property type="match status" value="1"/>
</dbReference>
<dbReference type="SMART" id="SM00994">
    <property type="entry name" value="zf-C4_ClpX"/>
    <property type="match status" value="1"/>
</dbReference>
<dbReference type="SUPFAM" id="SSF57716">
    <property type="entry name" value="Glucocorticoid receptor-like (DNA-binding domain)"/>
    <property type="match status" value="1"/>
</dbReference>
<dbReference type="SUPFAM" id="SSF52540">
    <property type="entry name" value="P-loop containing nucleoside triphosphate hydrolases"/>
    <property type="match status" value="1"/>
</dbReference>
<dbReference type="PROSITE" id="PS51902">
    <property type="entry name" value="CLPX_ZB"/>
    <property type="match status" value="1"/>
</dbReference>
<organism>
    <name type="scientific">Corynebacterium efficiens (strain DSM 44549 / YS-314 / AJ 12310 / JCM 11189 / NBRC 100395)</name>
    <dbReference type="NCBI Taxonomy" id="196164"/>
    <lineage>
        <taxon>Bacteria</taxon>
        <taxon>Bacillati</taxon>
        <taxon>Actinomycetota</taxon>
        <taxon>Actinomycetes</taxon>
        <taxon>Mycobacteriales</taxon>
        <taxon>Corynebacteriaceae</taxon>
        <taxon>Corynebacterium</taxon>
    </lineage>
</organism>
<evidence type="ECO:0000255" key="1">
    <source>
        <dbReference type="HAMAP-Rule" id="MF_00175"/>
    </source>
</evidence>
<evidence type="ECO:0000255" key="2">
    <source>
        <dbReference type="PROSITE-ProRule" id="PRU01250"/>
    </source>
</evidence>
<feature type="chain" id="PRO_0000160346" description="ATP-dependent Clp protease ATP-binding subunit ClpX">
    <location>
        <begin position="1"/>
        <end position="426"/>
    </location>
</feature>
<feature type="domain" description="ClpX-type ZB" evidence="2">
    <location>
        <begin position="1"/>
        <end position="54"/>
    </location>
</feature>
<feature type="binding site" evidence="2">
    <location>
        <position position="13"/>
    </location>
    <ligand>
        <name>Zn(2+)</name>
        <dbReference type="ChEBI" id="CHEBI:29105"/>
    </ligand>
</feature>
<feature type="binding site" evidence="2">
    <location>
        <position position="16"/>
    </location>
    <ligand>
        <name>Zn(2+)</name>
        <dbReference type="ChEBI" id="CHEBI:29105"/>
    </ligand>
</feature>
<feature type="binding site" evidence="2">
    <location>
        <position position="35"/>
    </location>
    <ligand>
        <name>Zn(2+)</name>
        <dbReference type="ChEBI" id="CHEBI:29105"/>
    </ligand>
</feature>
<feature type="binding site" evidence="2">
    <location>
        <position position="38"/>
    </location>
    <ligand>
        <name>Zn(2+)</name>
        <dbReference type="ChEBI" id="CHEBI:29105"/>
    </ligand>
</feature>
<feature type="binding site" evidence="1">
    <location>
        <begin position="127"/>
        <end position="134"/>
    </location>
    <ligand>
        <name>ATP</name>
        <dbReference type="ChEBI" id="CHEBI:30616"/>
    </ligand>
</feature>
<reference key="1">
    <citation type="journal article" date="2003" name="Genome Res.">
        <title>Comparative complete genome sequence analysis of the amino acid replacements responsible for the thermostability of Corynebacterium efficiens.</title>
        <authorList>
            <person name="Nishio Y."/>
            <person name="Nakamura Y."/>
            <person name="Kawarabayasi Y."/>
            <person name="Usuda Y."/>
            <person name="Kimura E."/>
            <person name="Sugimoto S."/>
            <person name="Matsui K."/>
            <person name="Yamagishi A."/>
            <person name="Kikuchi H."/>
            <person name="Ikeo K."/>
            <person name="Gojobori T."/>
        </authorList>
    </citation>
    <scope>NUCLEOTIDE SEQUENCE [LARGE SCALE GENOMIC DNA]</scope>
    <source>
        <strain>DSM 44549 / YS-314 / AJ 12310 / JCM 11189 / NBRC 100395</strain>
    </source>
</reference>
<comment type="function">
    <text evidence="1">ATP-dependent specificity component of the Clp protease. It directs the protease to specific substrates. Can perform chaperone functions in the absence of ClpP.</text>
</comment>
<comment type="subunit">
    <text evidence="1">Component of the ClpX-ClpP complex. Forms a hexameric ring that, in the presence of ATP, binds to fourteen ClpP subunits assembled into a disk-like structure with a central cavity, resembling the structure of eukaryotic proteasomes.</text>
</comment>
<comment type="similarity">
    <text evidence="1">Belongs to the ClpX chaperone family.</text>
</comment>
<name>CLPX_COREF</name>
<gene>
    <name evidence="1" type="primary">clpX</name>
    <name type="ordered locus">CE2291</name>
</gene>